<accession>Q5NI55</accession>
<comment type="function">
    <text evidence="1">Could be involved in insertion of integral membrane proteins into the membrane.</text>
</comment>
<comment type="subcellular location">
    <subcellularLocation>
        <location evidence="1">Cell inner membrane</location>
        <topology evidence="1">Peripheral membrane protein</topology>
        <orientation evidence="1">Cytoplasmic side</orientation>
    </subcellularLocation>
</comment>
<comment type="similarity">
    <text evidence="1">Belongs to the UPF0161 family.</text>
</comment>
<organism>
    <name type="scientific">Francisella tularensis subsp. tularensis (strain SCHU S4 / Schu 4)</name>
    <dbReference type="NCBI Taxonomy" id="177416"/>
    <lineage>
        <taxon>Bacteria</taxon>
        <taxon>Pseudomonadati</taxon>
        <taxon>Pseudomonadota</taxon>
        <taxon>Gammaproteobacteria</taxon>
        <taxon>Thiotrichales</taxon>
        <taxon>Francisellaceae</taxon>
        <taxon>Francisella</taxon>
    </lineage>
</organism>
<dbReference type="EMBL" id="AJ749949">
    <property type="protein sequence ID" value="CAG44867.1"/>
    <property type="molecule type" value="Genomic_DNA"/>
</dbReference>
<dbReference type="SMR" id="Q5NI55"/>
<dbReference type="STRING" id="177416.FTT_0234c"/>
<dbReference type="DNASU" id="3191338"/>
<dbReference type="EnsemblBacteria" id="CAG44867">
    <property type="protein sequence ID" value="CAG44867"/>
    <property type="gene ID" value="FTT_0234c"/>
</dbReference>
<dbReference type="KEGG" id="ftu:FTT_0234c"/>
<dbReference type="eggNOG" id="COG0759">
    <property type="taxonomic scope" value="Bacteria"/>
</dbReference>
<dbReference type="Proteomes" id="UP000001174">
    <property type="component" value="Chromosome"/>
</dbReference>
<dbReference type="GO" id="GO:0005886">
    <property type="term" value="C:plasma membrane"/>
    <property type="evidence" value="ECO:0007669"/>
    <property type="project" value="UniProtKB-SubCell"/>
</dbReference>
<dbReference type="HAMAP" id="MF_00386">
    <property type="entry name" value="UPF0161_YidD"/>
    <property type="match status" value="1"/>
</dbReference>
<dbReference type="InterPro" id="IPR002696">
    <property type="entry name" value="Membr_insert_effic_factor_YidD"/>
</dbReference>
<dbReference type="NCBIfam" id="TIGR00278">
    <property type="entry name" value="membrane protein insertion efficiency factor YidD"/>
    <property type="match status" value="1"/>
</dbReference>
<dbReference type="PANTHER" id="PTHR33383">
    <property type="entry name" value="MEMBRANE PROTEIN INSERTION EFFICIENCY FACTOR-RELATED"/>
    <property type="match status" value="1"/>
</dbReference>
<dbReference type="PANTHER" id="PTHR33383:SF1">
    <property type="entry name" value="MEMBRANE PROTEIN INSERTION EFFICIENCY FACTOR-RELATED"/>
    <property type="match status" value="1"/>
</dbReference>
<dbReference type="Pfam" id="PF01809">
    <property type="entry name" value="YidD"/>
    <property type="match status" value="1"/>
</dbReference>
<dbReference type="SMART" id="SM01234">
    <property type="entry name" value="Haemolytic"/>
    <property type="match status" value="1"/>
</dbReference>
<reference key="1">
    <citation type="journal article" date="2005" name="Nat. Genet.">
        <title>The complete genome sequence of Francisella tularensis, the causative agent of tularemia.</title>
        <authorList>
            <person name="Larsson P."/>
            <person name="Oyston P.C.F."/>
            <person name="Chain P."/>
            <person name="Chu M.C."/>
            <person name="Duffield M."/>
            <person name="Fuxelius H.-H."/>
            <person name="Garcia E."/>
            <person name="Haelltorp G."/>
            <person name="Johansson D."/>
            <person name="Isherwood K.E."/>
            <person name="Karp P.D."/>
            <person name="Larsson E."/>
            <person name="Liu Y."/>
            <person name="Michell S."/>
            <person name="Prior J."/>
            <person name="Prior R."/>
            <person name="Malfatti S."/>
            <person name="Sjoestedt A."/>
            <person name="Svensson K."/>
            <person name="Thompson N."/>
            <person name="Vergez L."/>
            <person name="Wagg J.K."/>
            <person name="Wren B.W."/>
            <person name="Lindler L.E."/>
            <person name="Andersson S.G.E."/>
            <person name="Forsman M."/>
            <person name="Titball R.W."/>
        </authorList>
    </citation>
    <scope>NUCLEOTIDE SEQUENCE [LARGE SCALE GENOMIC DNA]</scope>
    <source>
        <strain>SCHU S4 / Schu 4</strain>
    </source>
</reference>
<keyword id="KW-0997">Cell inner membrane</keyword>
<keyword id="KW-1003">Cell membrane</keyword>
<keyword id="KW-0472">Membrane</keyword>
<keyword id="KW-1185">Reference proteome</keyword>
<protein>
    <recommendedName>
        <fullName evidence="1">Putative membrane protein insertion efficiency factor</fullName>
    </recommendedName>
</protein>
<feature type="chain" id="PRO_0000253108" description="Putative membrane protein insertion efficiency factor">
    <location>
        <begin position="1"/>
        <end position="70"/>
    </location>
</feature>
<name>YIDD_FRATT</name>
<proteinExistence type="inferred from homology"/>
<sequence>MLINLYRYCISPFIPARCRYYPTCSEYALEALKTHGILKGLYLTTRRLLRCHPLSKRDYYDLVPCKNKKG</sequence>
<evidence type="ECO:0000255" key="1">
    <source>
        <dbReference type="HAMAP-Rule" id="MF_00386"/>
    </source>
</evidence>
<gene>
    <name type="ordered locus">FTT_0234c</name>
</gene>